<feature type="signal peptide" evidence="2">
    <location>
        <begin position="1"/>
        <end position="29"/>
    </location>
</feature>
<feature type="chain" id="PRO_0000153893" description="Non-specific lipid-transfer protein 2G">
    <location>
        <begin position="30"/>
        <end position="96"/>
    </location>
</feature>
<feature type="disulfide bond" evidence="2 3 6">
    <location>
        <begin position="31"/>
        <end position="63"/>
    </location>
</feature>
<feature type="disulfide bond" evidence="2 3 6">
    <location>
        <begin position="39"/>
        <end position="53"/>
    </location>
</feature>
<feature type="disulfide bond" evidence="2 3 6">
    <location>
        <begin position="54"/>
        <end position="89"/>
    </location>
</feature>
<feature type="disulfide bond" evidence="2 3 6">
    <location>
        <begin position="65"/>
        <end position="96"/>
    </location>
</feature>
<feature type="helix" evidence="7">
    <location>
        <begin position="33"/>
        <end position="39"/>
    </location>
</feature>
<feature type="helix" evidence="7">
    <location>
        <begin position="40"/>
        <end position="45"/>
    </location>
</feature>
<feature type="helix" evidence="7">
    <location>
        <begin position="51"/>
        <end position="60"/>
    </location>
</feature>
<feature type="helix" evidence="7">
    <location>
        <begin position="61"/>
        <end position="63"/>
    </location>
</feature>
<feature type="helix" evidence="7">
    <location>
        <begin position="64"/>
        <end position="67"/>
    </location>
</feature>
<feature type="turn" evidence="7">
    <location>
        <begin position="71"/>
        <end position="73"/>
    </location>
</feature>
<feature type="helix" evidence="7">
    <location>
        <begin position="74"/>
        <end position="77"/>
    </location>
</feature>
<feature type="helix" evidence="7">
    <location>
        <begin position="80"/>
        <end position="88"/>
    </location>
</feature>
<accession>P82900</accession>
<accession>Q2PCC8</accession>
<sequence>MAGMMKKQVVTALMLALVVLAAAPGGARAACQASQLAVCASAILSGAKPSGECCGNLRAQQGCFCQYAKDPTYGQYIRSPHARDTLTSCGLAVPHC</sequence>
<keyword id="KW-0002">3D-structure</keyword>
<keyword id="KW-0134">Cell wall</keyword>
<keyword id="KW-0961">Cell wall biogenesis/degradation</keyword>
<keyword id="KW-0903">Direct protein sequencing</keyword>
<keyword id="KW-1015">Disulfide bond</keyword>
<keyword id="KW-0445">Lipid transport</keyword>
<keyword id="KW-0446">Lipid-binding</keyword>
<keyword id="KW-1185">Reference proteome</keyword>
<keyword id="KW-0964">Secreted</keyword>
<keyword id="KW-0732">Signal</keyword>
<keyword id="KW-0813">Transport</keyword>
<proteinExistence type="evidence at protein level"/>
<evidence type="ECO:0000250" key="1"/>
<evidence type="ECO:0000269" key="2">
    <source>
    </source>
</evidence>
<evidence type="ECO:0000269" key="3">
    <source>
    </source>
</evidence>
<evidence type="ECO:0000303" key="4">
    <source>
    </source>
</evidence>
<evidence type="ECO:0000305" key="5"/>
<evidence type="ECO:0007744" key="6">
    <source>
        <dbReference type="PDB" id="1TUK"/>
    </source>
</evidence>
<evidence type="ECO:0007829" key="7">
    <source>
        <dbReference type="PDB" id="1TUK"/>
    </source>
</evidence>
<reference key="1">
    <citation type="journal article" date="2007" name="Planta">
        <title>The Triticum aestivum non-specific lipid transfer protein (TaLtp) gene family: comparative promoter activity of six TaLtp genes in transgenic rice.</title>
        <authorList>
            <person name="Boutrot F."/>
            <person name="Meynard D."/>
            <person name="Guiderdoni E."/>
            <person name="Joudrier P."/>
            <person name="Gautier M.-F."/>
        </authorList>
    </citation>
    <scope>NUCLEOTIDE SEQUENCE [GENOMIC DNA]</scope>
    <source>
        <tissue>Leaf</tissue>
    </source>
</reference>
<reference evidence="5" key="2">
    <citation type="journal article" date="2001" name="Eur. J. Biochem.">
        <title>Disulfide bond assignment, lipid transfer activity and secondary structure of a 7-kDa plant lipid transfer protein, LTP2.</title>
        <authorList>
            <person name="Douliez J.-P."/>
            <person name="Pato C."/>
            <person name="Rabesona H."/>
            <person name="Molle D."/>
            <person name="Marion D."/>
        </authorList>
    </citation>
    <scope>PROTEIN SEQUENCE OF 30-96</scope>
    <scope>FUNCTION</scope>
    <scope>MASS SPECTROMETRY</scope>
    <scope>DISULFIDE BONDS</scope>
    <source>
        <tissue>Endosperm</tissue>
    </source>
</reference>
<reference key="3">
    <citation type="journal article" date="2005" name="Acta Crystallogr. D">
        <title>Structure of a liganded type 2 non-specific lipid-transfer protein from wheat and the molecular basis of lipid binding.</title>
        <authorList>
            <person name="Hoh F."/>
            <person name="Pons J.L."/>
            <person name="Gautier M.F."/>
            <person name="de Lamotte F."/>
            <person name="Dumas C."/>
        </authorList>
    </citation>
    <scope>X-RAY CRYSTALLOGRAPHY (1.12 ANGSTROMS) OF 30-96 IN COMPLEX WITH L-ALPHA-PALMITOYL-PHOSPHATIDYL GLYCEROL</scope>
    <scope>DISULFIDE BONDS</scope>
</reference>
<comment type="function">
    <text evidence="2 4">Transfer lipids across membranes. May play a role in plant defense or in the biosynthesis of cuticle layers.</text>
</comment>
<comment type="subcellular location">
    <subcellularLocation>
        <location evidence="1">Secreted</location>
        <location evidence="1">Cell wall</location>
    </subcellularLocation>
</comment>
<comment type="mass spectrometry"/>
<comment type="similarity">
    <text evidence="5">Belongs to the plant LTP family. B11E subfamily.</text>
</comment>
<organism evidence="5">
    <name type="scientific">Triticum aestivum</name>
    <name type="common">Wheat</name>
    <dbReference type="NCBI Taxonomy" id="4565"/>
    <lineage>
        <taxon>Eukaryota</taxon>
        <taxon>Viridiplantae</taxon>
        <taxon>Streptophyta</taxon>
        <taxon>Embryophyta</taxon>
        <taxon>Tracheophyta</taxon>
        <taxon>Spermatophyta</taxon>
        <taxon>Magnoliopsida</taxon>
        <taxon>Liliopsida</taxon>
        <taxon>Poales</taxon>
        <taxon>Poaceae</taxon>
        <taxon>BOP clade</taxon>
        <taxon>Pooideae</taxon>
        <taxon>Triticodae</taxon>
        <taxon>Triticeae</taxon>
        <taxon>Triticinae</taxon>
        <taxon>Triticum</taxon>
    </lineage>
</organism>
<name>NLT2G_WHEAT</name>
<dbReference type="EMBL" id="AJ852549">
    <property type="protein sequence ID" value="CAH69200.1"/>
    <property type="molecule type" value="Genomic_DNA"/>
</dbReference>
<dbReference type="RefSeq" id="NP_001413697.1">
    <property type="nucleotide sequence ID" value="NM_001426768.1"/>
</dbReference>
<dbReference type="PDB" id="1N89">
    <property type="method" value="NMR"/>
    <property type="chains" value="A=30-96"/>
</dbReference>
<dbReference type="PDB" id="1TUK">
    <property type="method" value="X-ray"/>
    <property type="resolution" value="1.12 A"/>
    <property type="chains" value="A=30-96"/>
</dbReference>
<dbReference type="PDBsum" id="1N89"/>
<dbReference type="PDBsum" id="1TUK"/>
<dbReference type="SMR" id="P82900"/>
<dbReference type="STRING" id="4565.P82900"/>
<dbReference type="Allergome" id="8724">
    <property type="allergen name" value="Tri a 7k-LTP"/>
</dbReference>
<dbReference type="PaxDb" id="4565-Traes_4BL_AB3EBF1FD.2"/>
<dbReference type="EnsemblPlants" id="TraesARI4B03G02448920.1">
    <property type="protein sequence ID" value="TraesARI4B03G02448920.1.CDS1"/>
    <property type="gene ID" value="TraesARI4B03G02448920"/>
</dbReference>
<dbReference type="EnsemblPlants" id="TraesCAD_scaffold_031197_01G000500.1">
    <property type="protein sequence ID" value="TraesCAD_scaffold_031197_01G000500.1"/>
    <property type="gene ID" value="TraesCAD_scaffold_031197_01G000500"/>
</dbReference>
<dbReference type="EnsemblPlants" id="TraesCLE_scaffold_005285_01G000700.1">
    <property type="protein sequence ID" value="TraesCLE_scaffold_005285_01G000700.1"/>
    <property type="gene ID" value="TraesCLE_scaffold_005285_01G000700"/>
</dbReference>
<dbReference type="EnsemblPlants" id="TraesCS4B02G393300.1">
    <property type="protein sequence ID" value="TraesCS4B02G393300.1.cds1"/>
    <property type="gene ID" value="TraesCS4B02G393300"/>
</dbReference>
<dbReference type="EnsemblPlants" id="TraesCS4B03G1000000.1">
    <property type="protein sequence ID" value="TraesCS4B03G1000000.1.CDS1"/>
    <property type="gene ID" value="TraesCS4B03G1000000"/>
</dbReference>
<dbReference type="EnsemblPlants" id="TraesJAG4B03G02408330.1">
    <property type="protein sequence ID" value="TraesJAG4B03G02408330.1.CDS1"/>
    <property type="gene ID" value="TraesJAG4B03G02408330"/>
</dbReference>
<dbReference type="EnsemblPlants" id="TraesJUL4B03G02429890.1">
    <property type="protein sequence ID" value="TraesJUL4B03G02429890.1.CDS1"/>
    <property type="gene ID" value="TraesJUL4B03G02429890"/>
</dbReference>
<dbReference type="EnsemblPlants" id="TraesKAR4B01G0451690.1">
    <property type="protein sequence ID" value="cds.TraesKAR4B01G0451690.1"/>
    <property type="gene ID" value="TraesKAR4B01G0451690"/>
</dbReference>
<dbReference type="EnsemblPlants" id="TraesLAC4B03G02364080.1">
    <property type="protein sequence ID" value="TraesLAC4B03G02364080.1.CDS1"/>
    <property type="gene ID" value="TraesLAC4B03G02364080"/>
</dbReference>
<dbReference type="EnsemblPlants" id="TraesLDM4B03G02412520.1">
    <property type="protein sequence ID" value="TraesLDM4B03G02412520.1.CDS1"/>
    <property type="gene ID" value="TraesLDM4B03G02412520"/>
</dbReference>
<dbReference type="EnsemblPlants" id="TraesMAC4B03G02409960.1">
    <property type="protein sequence ID" value="TraesMAC4B03G02409960.1.CDS1"/>
    <property type="gene ID" value="TraesMAC4B03G02409960"/>
</dbReference>
<dbReference type="EnsemblPlants" id="TraesPARA_EIv1.0_1406770.1">
    <property type="protein sequence ID" value="TraesPARA_EIv1.0_1406770.1.CDS1"/>
    <property type="gene ID" value="TraesPARA_EIv1.0_1406770"/>
</dbReference>
<dbReference type="EnsemblPlants" id="TraesRN4B0101026600.1">
    <property type="protein sequence ID" value="TraesRN4B0101026600.1"/>
    <property type="gene ID" value="TraesRN4B0101026600"/>
</dbReference>
<dbReference type="EnsemblPlants" id="TraesROB_scaffold_004343_01G000700.1">
    <property type="protein sequence ID" value="TraesROB_scaffold_004343_01G000700.1"/>
    <property type="gene ID" value="TraesROB_scaffold_004343_01G000700"/>
</dbReference>
<dbReference type="EnsemblPlants" id="TraesSTA4B03G02405640.1">
    <property type="protein sequence ID" value="TraesSTA4B03G02405640.1.CDS1"/>
    <property type="gene ID" value="TraesSTA4B03G02405640"/>
</dbReference>
<dbReference type="EnsemblPlants" id="TraesSYM4B03G02438020.1">
    <property type="protein sequence ID" value="TraesSYM4B03G02438020.1.CDS1"/>
    <property type="gene ID" value="TraesSYM4B03G02438020"/>
</dbReference>
<dbReference type="EnsemblPlants" id="TraesWEE_scaffold_028928_01G000300.1">
    <property type="protein sequence ID" value="TraesWEE_scaffold_028928_01G000300.1"/>
    <property type="gene ID" value="TraesWEE_scaffold_028928_01G000300"/>
</dbReference>
<dbReference type="GeneID" id="123089827"/>
<dbReference type="Gramene" id="TraesARI4B03G02448920.1">
    <property type="protein sequence ID" value="TraesARI4B03G02448920.1.CDS1"/>
    <property type="gene ID" value="TraesARI4B03G02448920"/>
</dbReference>
<dbReference type="Gramene" id="TraesCAD_scaffold_031197_01G000500.1">
    <property type="protein sequence ID" value="TraesCAD_scaffold_031197_01G000500.1"/>
    <property type="gene ID" value="TraesCAD_scaffold_031197_01G000500"/>
</dbReference>
<dbReference type="Gramene" id="TraesCLE_scaffold_005285_01G000700.1">
    <property type="protein sequence ID" value="TraesCLE_scaffold_005285_01G000700.1"/>
    <property type="gene ID" value="TraesCLE_scaffold_005285_01G000700"/>
</dbReference>
<dbReference type="Gramene" id="TraesCS4B02G393300.1">
    <property type="protein sequence ID" value="TraesCS4B02G393300.1.cds1"/>
    <property type="gene ID" value="TraesCS4B02G393300"/>
</dbReference>
<dbReference type="Gramene" id="TraesCS4B03G1000000.1">
    <property type="protein sequence ID" value="TraesCS4B03G1000000.1.CDS1"/>
    <property type="gene ID" value="TraesCS4B03G1000000"/>
</dbReference>
<dbReference type="Gramene" id="TraesJAG4B03G02408330.1">
    <property type="protein sequence ID" value="TraesJAG4B03G02408330.1.CDS1"/>
    <property type="gene ID" value="TraesJAG4B03G02408330"/>
</dbReference>
<dbReference type="Gramene" id="TraesJUL4B03G02429890.1">
    <property type="protein sequence ID" value="TraesJUL4B03G02429890.1.CDS1"/>
    <property type="gene ID" value="TraesJUL4B03G02429890"/>
</dbReference>
<dbReference type="Gramene" id="TraesKAR4B01G0451690.1">
    <property type="protein sequence ID" value="cds.TraesKAR4B01G0451690.1"/>
    <property type="gene ID" value="TraesKAR4B01G0451690"/>
</dbReference>
<dbReference type="Gramene" id="TraesLAC4B03G02364080.1">
    <property type="protein sequence ID" value="TraesLAC4B03G02364080.1.CDS1"/>
    <property type="gene ID" value="TraesLAC4B03G02364080"/>
</dbReference>
<dbReference type="Gramene" id="TraesLDM4B03G02412520.1">
    <property type="protein sequence ID" value="TraesLDM4B03G02412520.1.CDS1"/>
    <property type="gene ID" value="TraesLDM4B03G02412520"/>
</dbReference>
<dbReference type="Gramene" id="TraesMAC4B03G02409960.1">
    <property type="protein sequence ID" value="TraesMAC4B03G02409960.1.CDS1"/>
    <property type="gene ID" value="TraesMAC4B03G02409960"/>
</dbReference>
<dbReference type="Gramene" id="TraesPARA_EIv1.0_1406770.1">
    <property type="protein sequence ID" value="TraesPARA_EIv1.0_1406770.1.CDS1"/>
    <property type="gene ID" value="TraesPARA_EIv1.0_1406770"/>
</dbReference>
<dbReference type="Gramene" id="TraesRN4B0101026600.1">
    <property type="protein sequence ID" value="TraesRN4B0101026600.1"/>
    <property type="gene ID" value="TraesRN4B0101026600"/>
</dbReference>
<dbReference type="Gramene" id="TraesROB_scaffold_004343_01G000700.1">
    <property type="protein sequence ID" value="TraesROB_scaffold_004343_01G000700.1"/>
    <property type="gene ID" value="TraesROB_scaffold_004343_01G000700"/>
</dbReference>
<dbReference type="Gramene" id="TraesSTA4B03G02405640.1">
    <property type="protein sequence ID" value="TraesSTA4B03G02405640.1.CDS1"/>
    <property type="gene ID" value="TraesSTA4B03G02405640"/>
</dbReference>
<dbReference type="Gramene" id="TraesSYM4B03G02438020.1">
    <property type="protein sequence ID" value="TraesSYM4B03G02438020.1.CDS1"/>
    <property type="gene ID" value="TraesSYM4B03G02438020"/>
</dbReference>
<dbReference type="Gramene" id="TraesWEE_scaffold_028928_01G000300.1">
    <property type="protein sequence ID" value="TraesWEE_scaffold_028928_01G000300.1"/>
    <property type="gene ID" value="TraesWEE_scaffold_028928_01G000300"/>
</dbReference>
<dbReference type="eggNOG" id="ENOG502S3N0">
    <property type="taxonomic scope" value="Eukaryota"/>
</dbReference>
<dbReference type="HOGENOM" id="CLU_158223_2_0_1"/>
<dbReference type="OMA" id="ASACRMS"/>
<dbReference type="OrthoDB" id="665742at2759"/>
<dbReference type="EvolutionaryTrace" id="P82900"/>
<dbReference type="Proteomes" id="UP000019116">
    <property type="component" value="Chromosome 4B"/>
</dbReference>
<dbReference type="GO" id="GO:0005576">
    <property type="term" value="C:extracellular region"/>
    <property type="evidence" value="ECO:0007669"/>
    <property type="project" value="UniProtKB-KW"/>
</dbReference>
<dbReference type="GO" id="GO:0008289">
    <property type="term" value="F:lipid binding"/>
    <property type="evidence" value="ECO:0007669"/>
    <property type="project" value="UniProtKB-KW"/>
</dbReference>
<dbReference type="GO" id="GO:0071555">
    <property type="term" value="P:cell wall organization"/>
    <property type="evidence" value="ECO:0007669"/>
    <property type="project" value="UniProtKB-KW"/>
</dbReference>
<dbReference type="GO" id="GO:0006869">
    <property type="term" value="P:lipid transport"/>
    <property type="evidence" value="ECO:0007669"/>
    <property type="project" value="UniProtKB-KW"/>
</dbReference>
<dbReference type="CDD" id="cd01959">
    <property type="entry name" value="nsLTP2"/>
    <property type="match status" value="1"/>
</dbReference>
<dbReference type="Gene3D" id="1.10.110.10">
    <property type="entry name" value="Plant lipid-transfer and hydrophobic proteins"/>
    <property type="match status" value="1"/>
</dbReference>
<dbReference type="InterPro" id="IPR036312">
    <property type="entry name" value="Bifun_inhib/LTP/seed_sf"/>
</dbReference>
<dbReference type="InterPro" id="IPR016140">
    <property type="entry name" value="Bifunc_inhib/LTP/seed_store"/>
</dbReference>
<dbReference type="InterPro" id="IPR033872">
    <property type="entry name" value="nsLTP2"/>
</dbReference>
<dbReference type="PANTHER" id="PTHR33214">
    <property type="entry name" value="BIFUNCTIONAL INHIBITOR/LIPID-TRANSFER PROTEIN/SEED STORAGE 2S ALBUMIN SUPERFAMILY PROTEIN"/>
    <property type="match status" value="1"/>
</dbReference>
<dbReference type="PANTHER" id="PTHR33214:SF34">
    <property type="entry name" value="NON-SPECIFIC LIPID-TRANSFER PROTEIN 2"/>
    <property type="match status" value="1"/>
</dbReference>
<dbReference type="Pfam" id="PF00234">
    <property type="entry name" value="Tryp_alpha_amyl"/>
    <property type="match status" value="1"/>
</dbReference>
<dbReference type="SUPFAM" id="SSF47699">
    <property type="entry name" value="Bifunctional inhibitor/lipid-transfer protein/seed storage 2S albumin"/>
    <property type="match status" value="1"/>
</dbReference>
<protein>
    <recommendedName>
        <fullName>Non-specific lipid-transfer protein 2G</fullName>
        <shortName>LTP2G</shortName>
    </recommendedName>
    <alternativeName>
        <fullName>7 kDa lipid transfer protein 1</fullName>
    </alternativeName>
    <alternativeName>
        <fullName>Lipid transfer protein 2 isoform 1</fullName>
        <shortName>LTP2-1</shortName>
    </alternativeName>
</protein>